<gene>
    <name evidence="1" type="primary">tmk</name>
    <name type="ordered locus">EAT1b_1706</name>
</gene>
<name>KTHY_EXISA</name>
<evidence type="ECO:0000255" key="1">
    <source>
        <dbReference type="HAMAP-Rule" id="MF_00165"/>
    </source>
</evidence>
<comment type="function">
    <text evidence="1">Phosphorylation of dTMP to form dTDP in both de novo and salvage pathways of dTTP synthesis.</text>
</comment>
<comment type="catalytic activity">
    <reaction evidence="1">
        <text>dTMP + ATP = dTDP + ADP</text>
        <dbReference type="Rhea" id="RHEA:13517"/>
        <dbReference type="ChEBI" id="CHEBI:30616"/>
        <dbReference type="ChEBI" id="CHEBI:58369"/>
        <dbReference type="ChEBI" id="CHEBI:63528"/>
        <dbReference type="ChEBI" id="CHEBI:456216"/>
        <dbReference type="EC" id="2.7.4.9"/>
    </reaction>
</comment>
<comment type="similarity">
    <text evidence="1">Belongs to the thymidylate kinase family.</text>
</comment>
<feature type="chain" id="PRO_1000203616" description="Thymidylate kinase">
    <location>
        <begin position="1"/>
        <end position="212"/>
    </location>
</feature>
<feature type="binding site" evidence="1">
    <location>
        <begin position="10"/>
        <end position="17"/>
    </location>
    <ligand>
        <name>ATP</name>
        <dbReference type="ChEBI" id="CHEBI:30616"/>
    </ligand>
</feature>
<organism>
    <name type="scientific">Exiguobacterium sp. (strain ATCC BAA-1283 / AT1b)</name>
    <dbReference type="NCBI Taxonomy" id="360911"/>
    <lineage>
        <taxon>Bacteria</taxon>
        <taxon>Bacillati</taxon>
        <taxon>Bacillota</taxon>
        <taxon>Bacilli</taxon>
        <taxon>Bacillales</taxon>
        <taxon>Bacillales Family XII. Incertae Sedis</taxon>
        <taxon>Exiguobacterium</taxon>
    </lineage>
</organism>
<accession>C4KZW9</accession>
<reference key="1">
    <citation type="journal article" date="2011" name="J. Bacteriol.">
        <title>Complete genome sequence of the Thermophilic Bacterium Exiguobacterium sp. AT1b.</title>
        <authorList>
            <person name="Vishnivetskaya T.A."/>
            <person name="Lucas S."/>
            <person name="Copeland A."/>
            <person name="Lapidus A."/>
            <person name="Glavina del Rio T."/>
            <person name="Dalin E."/>
            <person name="Tice H."/>
            <person name="Bruce D.C."/>
            <person name="Goodwin L.A."/>
            <person name="Pitluck S."/>
            <person name="Saunders E."/>
            <person name="Brettin T."/>
            <person name="Detter C."/>
            <person name="Han C."/>
            <person name="Larimer F."/>
            <person name="Land M.L."/>
            <person name="Hauser L.J."/>
            <person name="Kyrpides N.C."/>
            <person name="Ovchinnikova G."/>
            <person name="Kathariou S."/>
            <person name="Ramaley R.F."/>
            <person name="Rodrigues D.F."/>
            <person name="Hendrix C."/>
            <person name="Richardson P."/>
            <person name="Tiedje J.M."/>
        </authorList>
    </citation>
    <scope>NUCLEOTIDE SEQUENCE [LARGE SCALE GENOMIC DNA]</scope>
    <source>
        <strain>ATCC BAA-1283 / AT1b</strain>
    </source>
</reference>
<sequence length="212" mass="24065">MSGMFITVEGPDGSGKSTQLQLLVENLKQKGYDIVVTREPGGTTVGNQIREVLLSPDHHEMTPRVEMMLYAASRAQNVEQVIRPALERGAIVLCDRFIDASIAYQGYGLQYDLDQIRSLNEWATNGLTPDLTFLFDLNPERASARMKDRGQLDRIESRDQAFHERVYAGFQTLLKQYPERIVRIDADQSIECIQDEVLDYTIERLQQGGVQK</sequence>
<keyword id="KW-0067">ATP-binding</keyword>
<keyword id="KW-0418">Kinase</keyword>
<keyword id="KW-0545">Nucleotide biosynthesis</keyword>
<keyword id="KW-0547">Nucleotide-binding</keyword>
<keyword id="KW-0808">Transferase</keyword>
<proteinExistence type="inferred from homology"/>
<dbReference type="EC" id="2.7.4.9" evidence="1"/>
<dbReference type="EMBL" id="CP001615">
    <property type="protein sequence ID" value="ACQ70632.1"/>
    <property type="molecule type" value="Genomic_DNA"/>
</dbReference>
<dbReference type="RefSeq" id="WP_012727750.1">
    <property type="nucleotide sequence ID" value="NC_012673.1"/>
</dbReference>
<dbReference type="SMR" id="C4KZW9"/>
<dbReference type="STRING" id="360911.EAT1b_1706"/>
<dbReference type="KEGG" id="eat:EAT1b_1706"/>
<dbReference type="eggNOG" id="COG0125">
    <property type="taxonomic scope" value="Bacteria"/>
</dbReference>
<dbReference type="HOGENOM" id="CLU_049131_0_2_9"/>
<dbReference type="OrthoDB" id="9774907at2"/>
<dbReference type="Proteomes" id="UP000000716">
    <property type="component" value="Chromosome"/>
</dbReference>
<dbReference type="GO" id="GO:0005829">
    <property type="term" value="C:cytosol"/>
    <property type="evidence" value="ECO:0007669"/>
    <property type="project" value="TreeGrafter"/>
</dbReference>
<dbReference type="GO" id="GO:0005524">
    <property type="term" value="F:ATP binding"/>
    <property type="evidence" value="ECO:0007669"/>
    <property type="project" value="UniProtKB-UniRule"/>
</dbReference>
<dbReference type="GO" id="GO:0004798">
    <property type="term" value="F:dTMP kinase activity"/>
    <property type="evidence" value="ECO:0007669"/>
    <property type="project" value="UniProtKB-UniRule"/>
</dbReference>
<dbReference type="GO" id="GO:0006233">
    <property type="term" value="P:dTDP biosynthetic process"/>
    <property type="evidence" value="ECO:0007669"/>
    <property type="project" value="InterPro"/>
</dbReference>
<dbReference type="GO" id="GO:0006235">
    <property type="term" value="P:dTTP biosynthetic process"/>
    <property type="evidence" value="ECO:0007669"/>
    <property type="project" value="UniProtKB-UniRule"/>
</dbReference>
<dbReference type="GO" id="GO:0006227">
    <property type="term" value="P:dUDP biosynthetic process"/>
    <property type="evidence" value="ECO:0007669"/>
    <property type="project" value="TreeGrafter"/>
</dbReference>
<dbReference type="CDD" id="cd01672">
    <property type="entry name" value="TMPK"/>
    <property type="match status" value="1"/>
</dbReference>
<dbReference type="FunFam" id="3.40.50.300:FF:000225">
    <property type="entry name" value="Thymidylate kinase"/>
    <property type="match status" value="1"/>
</dbReference>
<dbReference type="Gene3D" id="3.40.50.300">
    <property type="entry name" value="P-loop containing nucleotide triphosphate hydrolases"/>
    <property type="match status" value="1"/>
</dbReference>
<dbReference type="HAMAP" id="MF_00165">
    <property type="entry name" value="Thymidylate_kinase"/>
    <property type="match status" value="1"/>
</dbReference>
<dbReference type="InterPro" id="IPR027417">
    <property type="entry name" value="P-loop_NTPase"/>
</dbReference>
<dbReference type="InterPro" id="IPR039430">
    <property type="entry name" value="Thymidylate_kin-like_dom"/>
</dbReference>
<dbReference type="InterPro" id="IPR018094">
    <property type="entry name" value="Thymidylate_kinase"/>
</dbReference>
<dbReference type="NCBIfam" id="TIGR00041">
    <property type="entry name" value="DTMP_kinase"/>
    <property type="match status" value="1"/>
</dbReference>
<dbReference type="PANTHER" id="PTHR10344">
    <property type="entry name" value="THYMIDYLATE KINASE"/>
    <property type="match status" value="1"/>
</dbReference>
<dbReference type="PANTHER" id="PTHR10344:SF4">
    <property type="entry name" value="UMP-CMP KINASE 2, MITOCHONDRIAL"/>
    <property type="match status" value="1"/>
</dbReference>
<dbReference type="Pfam" id="PF02223">
    <property type="entry name" value="Thymidylate_kin"/>
    <property type="match status" value="1"/>
</dbReference>
<dbReference type="SUPFAM" id="SSF52540">
    <property type="entry name" value="P-loop containing nucleoside triphosphate hydrolases"/>
    <property type="match status" value="1"/>
</dbReference>
<protein>
    <recommendedName>
        <fullName evidence="1">Thymidylate kinase</fullName>
        <ecNumber evidence="1">2.7.4.9</ecNumber>
    </recommendedName>
    <alternativeName>
        <fullName evidence="1">dTMP kinase</fullName>
    </alternativeName>
</protein>